<keyword id="KW-0008">Acetylcholine receptor inhibiting toxin</keyword>
<keyword id="KW-0903">Direct protein sequencing</keyword>
<keyword id="KW-1015">Disulfide bond</keyword>
<keyword id="KW-0872">Ion channel impairing toxin</keyword>
<keyword id="KW-0528">Neurotoxin</keyword>
<keyword id="KW-0629">Postsynaptic neurotoxin</keyword>
<keyword id="KW-0964">Secreted</keyword>
<keyword id="KW-0800">Toxin</keyword>
<feature type="chain" id="PRO_0000394459" description="Frontoxin I" evidence="3">
    <location>
        <begin position="1"/>
        <end position="56" status="greater than"/>
    </location>
</feature>
<feature type="disulfide bond" evidence="1">
    <location>
        <begin position="3"/>
        <end position="22"/>
    </location>
</feature>
<feature type="disulfide bond" evidence="1">
    <location>
        <begin position="17"/>
        <end position="39"/>
    </location>
</feature>
<feature type="disulfide bond" evidence="1">
    <location>
        <begin position="41"/>
        <end position="52"/>
    </location>
</feature>
<feature type="disulfide bond" evidence="1">
    <location>
        <begin position="53"/>
        <end position="56"/>
    </location>
</feature>
<feature type="non-terminal residue" evidence="5">
    <location>
        <position position="56"/>
    </location>
</feature>
<organism>
    <name type="scientific">Micrurus frontalis</name>
    <name type="common">Coral snake</name>
    <dbReference type="NCBI Taxonomy" id="129461"/>
    <lineage>
        <taxon>Eukaryota</taxon>
        <taxon>Metazoa</taxon>
        <taxon>Chordata</taxon>
        <taxon>Craniata</taxon>
        <taxon>Vertebrata</taxon>
        <taxon>Euteleostomi</taxon>
        <taxon>Lepidosauria</taxon>
        <taxon>Squamata</taxon>
        <taxon>Bifurcata</taxon>
        <taxon>Unidentata</taxon>
        <taxon>Episquamata</taxon>
        <taxon>Toxicofera</taxon>
        <taxon>Serpentes</taxon>
        <taxon>Colubroidea</taxon>
        <taxon>Elapidae</taxon>
        <taxon>Elapinae</taxon>
        <taxon>Micrurus</taxon>
    </lineage>
</organism>
<proteinExistence type="evidence at protein level"/>
<accession>P86420</accession>
<evidence type="ECO:0000250" key="1">
    <source>
        <dbReference type="UniProtKB" id="P01427"/>
    </source>
</evidence>
<evidence type="ECO:0000250" key="2">
    <source>
        <dbReference type="UniProtKB" id="P60775"/>
    </source>
</evidence>
<evidence type="ECO:0000269" key="3">
    <source>
    </source>
</evidence>
<evidence type="ECO:0000269" key="4">
    <source>
    </source>
</evidence>
<evidence type="ECO:0000303" key="5">
    <source>
    </source>
</evidence>
<evidence type="ECO:0000305" key="6"/>
<name>3S11_MICFR</name>
<sequence>MICYNHQSSEPPTTKTCSEGQCYKKSWSDHRGTIIERGCACPNVKPGVKIICCRSC</sequence>
<dbReference type="SMR" id="P86420"/>
<dbReference type="GO" id="GO:0005576">
    <property type="term" value="C:extracellular region"/>
    <property type="evidence" value="ECO:0007669"/>
    <property type="project" value="UniProtKB-SubCell"/>
</dbReference>
<dbReference type="GO" id="GO:0030550">
    <property type="term" value="F:acetylcholine receptor inhibitor activity"/>
    <property type="evidence" value="ECO:0007669"/>
    <property type="project" value="UniProtKB-KW"/>
</dbReference>
<dbReference type="GO" id="GO:0099106">
    <property type="term" value="F:ion channel regulator activity"/>
    <property type="evidence" value="ECO:0007669"/>
    <property type="project" value="UniProtKB-KW"/>
</dbReference>
<dbReference type="GO" id="GO:0090729">
    <property type="term" value="F:toxin activity"/>
    <property type="evidence" value="ECO:0007669"/>
    <property type="project" value="UniProtKB-KW"/>
</dbReference>
<dbReference type="CDD" id="cd00206">
    <property type="entry name" value="TFP_snake_toxin"/>
    <property type="match status" value="1"/>
</dbReference>
<dbReference type="FunFam" id="2.10.60.10:FF:000024">
    <property type="entry name" value="Cytotoxin 1"/>
    <property type="match status" value="1"/>
</dbReference>
<dbReference type="Gene3D" id="2.10.60.10">
    <property type="entry name" value="CD59"/>
    <property type="match status" value="1"/>
</dbReference>
<dbReference type="InterPro" id="IPR003571">
    <property type="entry name" value="Snake_3FTx"/>
</dbReference>
<dbReference type="InterPro" id="IPR045860">
    <property type="entry name" value="Snake_toxin-like_sf"/>
</dbReference>
<dbReference type="InterPro" id="IPR054131">
    <property type="entry name" value="Toxin_cobra-type"/>
</dbReference>
<dbReference type="Pfam" id="PF21947">
    <property type="entry name" value="Toxin_cobra-type"/>
    <property type="match status" value="1"/>
</dbReference>
<dbReference type="SUPFAM" id="SSF57302">
    <property type="entry name" value="Snake toxin-like"/>
    <property type="match status" value="1"/>
</dbReference>
<protein>
    <recommendedName>
        <fullName evidence="5">Frontoxin I</fullName>
        <shortName evidence="5">FTx I</shortName>
    </recommendedName>
</protein>
<comment type="function">
    <text evidence="2">Binds to muscle nicotinic acetylcholine receptor (nAChR) and inhibit acetylcholine from binding to the receptor, thereby impairing neuromuscular transmission.</text>
</comment>
<comment type="subcellular location">
    <subcellularLocation>
        <location evidence="4">Secreted</location>
    </subcellularLocation>
</comment>
<comment type="tissue specificity">
    <text evidence="6">Expressed by the venom gland.</text>
</comment>
<comment type="mass spectrometry"/>
<comment type="toxic dose">
    <text evidence="4">LD(50) is 0.25-0.5 mg/kg by intravenous injection into mice.</text>
</comment>
<comment type="similarity">
    <text evidence="6">Belongs to the three-finger toxin family. Short-chain subfamily. Type I alpha-neurotoxin sub-subfamily.</text>
</comment>
<reference key="1">
    <citation type="journal article" date="2010" name="Toxicon">
        <title>Frontoxins, three-finger toxins from Micrurus frontalis venom, decrease miniature endplate potential amplitude at frog neuromuscular junction.</title>
        <authorList>
            <person name="Moreira K.G."/>
            <person name="Prates M.V."/>
            <person name="Andrade F.A."/>
            <person name="Silva L.P."/>
            <person name="Beirao P.S."/>
            <person name="Kushmerick C."/>
            <person name="Naves L.A."/>
            <person name="Bloch C. Jr."/>
        </authorList>
    </citation>
    <scope>PROTEIN SEQUENCE</scope>
    <scope>MASS SPECTROMETRY</scope>
    <source>
        <tissue>Venom</tissue>
    </source>
</reference>
<reference key="2">
    <citation type="journal article" date="1997" name="Toxicon">
        <title>Toxins isolated from the venom of the Brazilian coral snake (Micrurus frontalis frontalis) include hemorrhagic type phospholipases A2 and postsynaptic neurotoxins.</title>
        <authorList>
            <person name="Francis B.R."/>
            <person name="da Silva Junior N.J."/>
            <person name="Seebart C."/>
            <person name="Casais e Silva L.L."/>
            <person name="Schmidt J.J."/>
            <person name="Kaiser I.I."/>
        </authorList>
    </citation>
    <scope>PROTEIN SEQUENCE OF 1-35</scope>
    <scope>TOXIC DOSE</scope>
    <scope>SUBCELLULAR LOCATION</scope>
</reference>